<organism>
    <name type="scientific">Streptomyces coelicolor (strain ATCC BAA-471 / A3(2) / M145)</name>
    <dbReference type="NCBI Taxonomy" id="100226"/>
    <lineage>
        <taxon>Bacteria</taxon>
        <taxon>Bacillati</taxon>
        <taxon>Actinomycetota</taxon>
        <taxon>Actinomycetes</taxon>
        <taxon>Kitasatosporales</taxon>
        <taxon>Streptomycetaceae</taxon>
        <taxon>Streptomyces</taxon>
        <taxon>Streptomyces albidoflavus group</taxon>
    </lineage>
</organism>
<keyword id="KW-0001">2Fe-2S</keyword>
<keyword id="KW-0004">4Fe-4S</keyword>
<keyword id="KW-0093">Biotin biosynthesis</keyword>
<keyword id="KW-0408">Iron</keyword>
<keyword id="KW-0411">Iron-sulfur</keyword>
<keyword id="KW-0479">Metal-binding</keyword>
<keyword id="KW-1185">Reference proteome</keyword>
<keyword id="KW-0949">S-adenosyl-L-methionine</keyword>
<keyword id="KW-0808">Transferase</keyword>
<accession>Q9FCC3</accession>
<reference key="1">
    <citation type="journal article" date="2002" name="Nature">
        <title>Complete genome sequence of the model actinomycete Streptomyces coelicolor A3(2).</title>
        <authorList>
            <person name="Bentley S.D."/>
            <person name="Chater K.F."/>
            <person name="Cerdeno-Tarraga A.-M."/>
            <person name="Challis G.L."/>
            <person name="Thomson N.R."/>
            <person name="James K.D."/>
            <person name="Harris D.E."/>
            <person name="Quail M.A."/>
            <person name="Kieser H."/>
            <person name="Harper D."/>
            <person name="Bateman A."/>
            <person name="Brown S."/>
            <person name="Chandra G."/>
            <person name="Chen C.W."/>
            <person name="Collins M."/>
            <person name="Cronin A."/>
            <person name="Fraser A."/>
            <person name="Goble A."/>
            <person name="Hidalgo J."/>
            <person name="Hornsby T."/>
            <person name="Howarth S."/>
            <person name="Huang C.-H."/>
            <person name="Kieser T."/>
            <person name="Larke L."/>
            <person name="Murphy L.D."/>
            <person name="Oliver K."/>
            <person name="O'Neil S."/>
            <person name="Rabbinowitsch E."/>
            <person name="Rajandream M.A."/>
            <person name="Rutherford K.M."/>
            <person name="Rutter S."/>
            <person name="Seeger K."/>
            <person name="Saunders D."/>
            <person name="Sharp S."/>
            <person name="Squares R."/>
            <person name="Squares S."/>
            <person name="Taylor K."/>
            <person name="Warren T."/>
            <person name="Wietzorrek A."/>
            <person name="Woodward J.R."/>
            <person name="Barrell B.G."/>
            <person name="Parkhill J."/>
            <person name="Hopwood D.A."/>
        </authorList>
    </citation>
    <scope>NUCLEOTIDE SEQUENCE [LARGE SCALE GENOMIC DNA]</scope>
    <source>
        <strain>ATCC BAA-471 / A3(2) / M145</strain>
    </source>
</reference>
<comment type="function">
    <text evidence="1">Catalyzes the conversion of dethiobiotin (DTB) to biotin by the insertion of a sulfur atom into dethiobiotin via a radical-based mechanism.</text>
</comment>
<comment type="catalytic activity">
    <reaction evidence="1">
        <text>(4R,5S)-dethiobiotin + (sulfur carrier)-SH + 2 reduced [2Fe-2S]-[ferredoxin] + 2 S-adenosyl-L-methionine = (sulfur carrier)-H + biotin + 2 5'-deoxyadenosine + 2 L-methionine + 2 oxidized [2Fe-2S]-[ferredoxin]</text>
        <dbReference type="Rhea" id="RHEA:22060"/>
        <dbReference type="Rhea" id="RHEA-COMP:10000"/>
        <dbReference type="Rhea" id="RHEA-COMP:10001"/>
        <dbReference type="Rhea" id="RHEA-COMP:14737"/>
        <dbReference type="Rhea" id="RHEA-COMP:14739"/>
        <dbReference type="ChEBI" id="CHEBI:17319"/>
        <dbReference type="ChEBI" id="CHEBI:29917"/>
        <dbReference type="ChEBI" id="CHEBI:33737"/>
        <dbReference type="ChEBI" id="CHEBI:33738"/>
        <dbReference type="ChEBI" id="CHEBI:57586"/>
        <dbReference type="ChEBI" id="CHEBI:57844"/>
        <dbReference type="ChEBI" id="CHEBI:59789"/>
        <dbReference type="ChEBI" id="CHEBI:64428"/>
        <dbReference type="ChEBI" id="CHEBI:149473"/>
        <dbReference type="EC" id="2.8.1.6"/>
    </reaction>
</comment>
<comment type="cofactor">
    <cofactor evidence="1">
        <name>[4Fe-4S] cluster</name>
        <dbReference type="ChEBI" id="CHEBI:49883"/>
    </cofactor>
    <text evidence="1">Binds 1 [4Fe-4S] cluster. The cluster is coordinated with 3 cysteines and an exchangeable S-adenosyl-L-methionine.</text>
</comment>
<comment type="cofactor">
    <cofactor evidence="1">
        <name>[2Fe-2S] cluster</name>
        <dbReference type="ChEBI" id="CHEBI:190135"/>
    </cofactor>
    <text evidence="1">Binds 1 [2Fe-2S] cluster. The cluster is coordinated with 3 cysteines and 1 arginine.</text>
</comment>
<comment type="pathway">
    <text evidence="1">Cofactor biosynthesis; biotin biosynthesis; biotin from 7,8-diaminononanoate: step 2/2.</text>
</comment>
<comment type="subunit">
    <text evidence="1">Homodimer.</text>
</comment>
<comment type="similarity">
    <text evidence="1">Belongs to the radical SAM superfamily. Biotin synthase family.</text>
</comment>
<protein>
    <recommendedName>
        <fullName evidence="1">Biotin synthase</fullName>
        <ecNumber evidence="1">2.8.1.6</ecNumber>
    </recommendedName>
</protein>
<feature type="chain" id="PRO_0000381664" description="Biotin synthase">
    <location>
        <begin position="1"/>
        <end position="407"/>
    </location>
</feature>
<feature type="domain" description="Radical SAM core" evidence="2">
    <location>
        <begin position="47"/>
        <end position="277"/>
    </location>
</feature>
<feature type="region of interest" description="Disordered" evidence="3">
    <location>
        <begin position="368"/>
        <end position="407"/>
    </location>
</feature>
<feature type="compositionally biased region" description="Low complexity" evidence="3">
    <location>
        <begin position="373"/>
        <end position="382"/>
    </location>
</feature>
<feature type="binding site" evidence="1">
    <location>
        <position position="65"/>
    </location>
    <ligand>
        <name>[4Fe-4S] cluster</name>
        <dbReference type="ChEBI" id="CHEBI:49883"/>
        <note>4Fe-4S-S-AdoMet</note>
    </ligand>
</feature>
<feature type="binding site" evidence="1">
    <location>
        <position position="69"/>
    </location>
    <ligand>
        <name>[4Fe-4S] cluster</name>
        <dbReference type="ChEBI" id="CHEBI:49883"/>
        <note>4Fe-4S-S-AdoMet</note>
    </ligand>
</feature>
<feature type="binding site" evidence="1">
    <location>
        <position position="72"/>
    </location>
    <ligand>
        <name>[4Fe-4S] cluster</name>
        <dbReference type="ChEBI" id="CHEBI:49883"/>
        <note>4Fe-4S-S-AdoMet</note>
    </ligand>
</feature>
<feature type="binding site" evidence="1">
    <location>
        <position position="109"/>
    </location>
    <ligand>
        <name>[2Fe-2S] cluster</name>
        <dbReference type="ChEBI" id="CHEBI:190135"/>
    </ligand>
</feature>
<feature type="binding site" evidence="1">
    <location>
        <position position="142"/>
    </location>
    <ligand>
        <name>[2Fe-2S] cluster</name>
        <dbReference type="ChEBI" id="CHEBI:190135"/>
    </ligand>
</feature>
<feature type="binding site" evidence="1">
    <location>
        <position position="202"/>
    </location>
    <ligand>
        <name>[2Fe-2S] cluster</name>
        <dbReference type="ChEBI" id="CHEBI:190135"/>
    </ligand>
</feature>
<feature type="binding site" evidence="1">
    <location>
        <position position="272"/>
    </location>
    <ligand>
        <name>[2Fe-2S] cluster</name>
        <dbReference type="ChEBI" id="CHEBI:190135"/>
    </ligand>
</feature>
<dbReference type="EC" id="2.8.1.6" evidence="1"/>
<dbReference type="EMBL" id="AL939108">
    <property type="protein sequence ID" value="CAC01468.1"/>
    <property type="molecule type" value="Genomic_DNA"/>
</dbReference>
<dbReference type="RefSeq" id="NP_625532.1">
    <property type="nucleotide sequence ID" value="NC_003888.3"/>
</dbReference>
<dbReference type="RefSeq" id="WP_011027664.1">
    <property type="nucleotide sequence ID" value="NZ_VNID01000006.1"/>
</dbReference>
<dbReference type="SMR" id="Q9FCC3"/>
<dbReference type="FunCoup" id="Q9FCC3">
    <property type="interactions" value="281"/>
</dbReference>
<dbReference type="STRING" id="100226.gene:17758827"/>
<dbReference type="PaxDb" id="100226-SCO1244"/>
<dbReference type="KEGG" id="sco:SCO1244"/>
<dbReference type="PATRIC" id="fig|100226.15.peg.1244"/>
<dbReference type="eggNOG" id="COG0502">
    <property type="taxonomic scope" value="Bacteria"/>
</dbReference>
<dbReference type="HOGENOM" id="CLU_033172_2_1_11"/>
<dbReference type="InParanoid" id="Q9FCC3"/>
<dbReference type="OrthoDB" id="9786826at2"/>
<dbReference type="PhylomeDB" id="Q9FCC3"/>
<dbReference type="UniPathway" id="UPA00078">
    <property type="reaction ID" value="UER00162"/>
</dbReference>
<dbReference type="Proteomes" id="UP000001973">
    <property type="component" value="Chromosome"/>
</dbReference>
<dbReference type="GO" id="GO:0051537">
    <property type="term" value="F:2 iron, 2 sulfur cluster binding"/>
    <property type="evidence" value="ECO:0000318"/>
    <property type="project" value="GO_Central"/>
</dbReference>
<dbReference type="GO" id="GO:0051539">
    <property type="term" value="F:4 iron, 4 sulfur cluster binding"/>
    <property type="evidence" value="ECO:0007669"/>
    <property type="project" value="UniProtKB-KW"/>
</dbReference>
<dbReference type="GO" id="GO:0004076">
    <property type="term" value="F:biotin synthase activity"/>
    <property type="evidence" value="ECO:0000318"/>
    <property type="project" value="GO_Central"/>
</dbReference>
<dbReference type="GO" id="GO:0005506">
    <property type="term" value="F:iron ion binding"/>
    <property type="evidence" value="ECO:0007669"/>
    <property type="project" value="UniProtKB-UniRule"/>
</dbReference>
<dbReference type="GO" id="GO:0009102">
    <property type="term" value="P:biotin biosynthetic process"/>
    <property type="evidence" value="ECO:0000318"/>
    <property type="project" value="GO_Central"/>
</dbReference>
<dbReference type="CDD" id="cd01335">
    <property type="entry name" value="Radical_SAM"/>
    <property type="match status" value="1"/>
</dbReference>
<dbReference type="FunFam" id="3.20.20.70:FF:000026">
    <property type="entry name" value="Biotin synthase"/>
    <property type="match status" value="1"/>
</dbReference>
<dbReference type="Gene3D" id="3.20.20.70">
    <property type="entry name" value="Aldolase class I"/>
    <property type="match status" value="1"/>
</dbReference>
<dbReference type="HAMAP" id="MF_01694">
    <property type="entry name" value="BioB"/>
    <property type="match status" value="1"/>
</dbReference>
<dbReference type="InterPro" id="IPR013785">
    <property type="entry name" value="Aldolase_TIM"/>
</dbReference>
<dbReference type="InterPro" id="IPR010722">
    <property type="entry name" value="BATS_dom"/>
</dbReference>
<dbReference type="InterPro" id="IPR002684">
    <property type="entry name" value="Biotin_synth/BioAB"/>
</dbReference>
<dbReference type="InterPro" id="IPR006638">
    <property type="entry name" value="Elp3/MiaA/NifB-like_rSAM"/>
</dbReference>
<dbReference type="InterPro" id="IPR007197">
    <property type="entry name" value="rSAM"/>
</dbReference>
<dbReference type="NCBIfam" id="TIGR00433">
    <property type="entry name" value="bioB"/>
    <property type="match status" value="1"/>
</dbReference>
<dbReference type="PANTHER" id="PTHR22976">
    <property type="entry name" value="BIOTIN SYNTHASE"/>
    <property type="match status" value="1"/>
</dbReference>
<dbReference type="PANTHER" id="PTHR22976:SF2">
    <property type="entry name" value="BIOTIN SYNTHASE, MITOCHONDRIAL"/>
    <property type="match status" value="1"/>
</dbReference>
<dbReference type="Pfam" id="PF06968">
    <property type="entry name" value="BATS"/>
    <property type="match status" value="1"/>
</dbReference>
<dbReference type="Pfam" id="PF04055">
    <property type="entry name" value="Radical_SAM"/>
    <property type="match status" value="1"/>
</dbReference>
<dbReference type="SFLD" id="SFLDG01060">
    <property type="entry name" value="BATS_domain_containing"/>
    <property type="match status" value="1"/>
</dbReference>
<dbReference type="SFLD" id="SFLDG01278">
    <property type="entry name" value="biotin_synthase_like"/>
    <property type="match status" value="1"/>
</dbReference>
<dbReference type="SMART" id="SM00876">
    <property type="entry name" value="BATS"/>
    <property type="match status" value="1"/>
</dbReference>
<dbReference type="SMART" id="SM00729">
    <property type="entry name" value="Elp3"/>
    <property type="match status" value="1"/>
</dbReference>
<dbReference type="SUPFAM" id="SSF102114">
    <property type="entry name" value="Radical SAM enzymes"/>
    <property type="match status" value="1"/>
</dbReference>
<dbReference type="PROSITE" id="PS51918">
    <property type="entry name" value="RADICAL_SAM"/>
    <property type="match status" value="1"/>
</dbReference>
<gene>
    <name evidence="1" type="primary">bioB</name>
    <name type="ordered locus">SCO1244</name>
    <name type="ORF">2SCG1.19</name>
</gene>
<sequence length="407" mass="42903">MDLLNTLVDKGLRRETPTREEALAVLVTSDDDLLDVVAAAGKVRRHWFGRRVKLNYLVNLKSGLCPEDCSYCSQRLGSKAEILKYTWLKPDQASAAAAAGVSGGAKRVCLVASGRGPTDRDVDRVSDTIKAIKEQNESVEVCACLGLLSDGQAERLREAGADAYNHNLNTSESTYGDITTTHTYADRVDTVNKAHAAGLSACSGLIAGMGESDEDLVDVVFSLRELDPDSVPVNFLIPMEGTPLAKEWHLTPQRCLRILAMTRFVCPDVEVRIAGGREVHLRTMQPLALHLANSIFLGDYLTSEGQAGHADLELIADAGFEVEGAGEVTLPEHRASVRGGGCGSHEGGGACGSHDGADGDAGCGSHAGGGVCAPAPAATTPRPAEEPRTDLVAVRRRGAGTDLAPNA</sequence>
<proteinExistence type="inferred from homology"/>
<evidence type="ECO:0000255" key="1">
    <source>
        <dbReference type="HAMAP-Rule" id="MF_01694"/>
    </source>
</evidence>
<evidence type="ECO:0000255" key="2">
    <source>
        <dbReference type="PROSITE-ProRule" id="PRU01266"/>
    </source>
</evidence>
<evidence type="ECO:0000256" key="3">
    <source>
        <dbReference type="SAM" id="MobiDB-lite"/>
    </source>
</evidence>
<name>BIOB_STRCO</name>